<feature type="chain" id="PRO_1000099248" description="Diaminopimelate epimerase">
    <location>
        <begin position="1"/>
        <end position="279"/>
    </location>
</feature>
<feature type="active site" description="Proton donor" evidence="1">
    <location>
        <position position="72"/>
    </location>
</feature>
<feature type="active site" description="Proton acceptor" evidence="1">
    <location>
        <position position="221"/>
    </location>
</feature>
<feature type="binding site" evidence="1">
    <location>
        <position position="11"/>
    </location>
    <ligand>
        <name>substrate</name>
    </ligand>
</feature>
<feature type="binding site" evidence="1">
    <location>
        <position position="63"/>
    </location>
    <ligand>
        <name>substrate</name>
    </ligand>
</feature>
<feature type="binding site" evidence="1">
    <location>
        <begin position="73"/>
        <end position="74"/>
    </location>
    <ligand>
        <name>substrate</name>
    </ligand>
</feature>
<feature type="binding site" evidence="1">
    <location>
        <position position="161"/>
    </location>
    <ligand>
        <name>substrate</name>
    </ligand>
</feature>
<feature type="binding site" evidence="1">
    <location>
        <position position="194"/>
    </location>
    <ligand>
        <name>substrate</name>
    </ligand>
</feature>
<feature type="binding site" evidence="1">
    <location>
        <begin position="212"/>
        <end position="213"/>
    </location>
    <ligand>
        <name>substrate</name>
    </ligand>
</feature>
<feature type="binding site" evidence="1">
    <location>
        <begin position="222"/>
        <end position="223"/>
    </location>
    <ligand>
        <name>substrate</name>
    </ligand>
</feature>
<feature type="site" description="Could be important to modulate the pK values of the two catalytic cysteine residues" evidence="1">
    <location>
        <position position="163"/>
    </location>
</feature>
<feature type="site" description="Could be important to modulate the pK values of the two catalytic cysteine residues" evidence="1">
    <location>
        <position position="212"/>
    </location>
</feature>
<organism>
    <name type="scientific">Moorella thermoacetica (strain ATCC 39073 / JCM 9320)</name>
    <dbReference type="NCBI Taxonomy" id="264732"/>
    <lineage>
        <taxon>Bacteria</taxon>
        <taxon>Bacillati</taxon>
        <taxon>Bacillota</taxon>
        <taxon>Clostridia</taxon>
        <taxon>Moorellales</taxon>
        <taxon>Moorellaceae</taxon>
        <taxon>Moorella</taxon>
    </lineage>
</organism>
<protein>
    <recommendedName>
        <fullName evidence="1">Diaminopimelate epimerase</fullName>
        <shortName evidence="1">DAP epimerase</shortName>
        <ecNumber evidence="1">5.1.1.7</ecNumber>
    </recommendedName>
    <alternativeName>
        <fullName evidence="1">PLP-independent amino acid racemase</fullName>
    </alternativeName>
</protein>
<accession>Q2RK34</accession>
<gene>
    <name evidence="1" type="primary">dapF</name>
    <name type="ordered locus">Moth_0888</name>
</gene>
<comment type="function">
    <text evidence="1">Catalyzes the stereoinversion of LL-2,6-diaminopimelate (L,L-DAP) to meso-diaminopimelate (meso-DAP), a precursor of L-lysine and an essential component of the bacterial peptidoglycan.</text>
</comment>
<comment type="catalytic activity">
    <reaction evidence="1">
        <text>(2S,6S)-2,6-diaminopimelate = meso-2,6-diaminopimelate</text>
        <dbReference type="Rhea" id="RHEA:15393"/>
        <dbReference type="ChEBI" id="CHEBI:57609"/>
        <dbReference type="ChEBI" id="CHEBI:57791"/>
        <dbReference type="EC" id="5.1.1.7"/>
    </reaction>
</comment>
<comment type="pathway">
    <text evidence="1">Amino-acid biosynthesis; L-lysine biosynthesis via DAP pathway; DL-2,6-diaminopimelate from LL-2,6-diaminopimelate: step 1/1.</text>
</comment>
<comment type="subunit">
    <text evidence="1">Homodimer.</text>
</comment>
<comment type="subcellular location">
    <subcellularLocation>
        <location evidence="1">Cytoplasm</location>
    </subcellularLocation>
</comment>
<comment type="similarity">
    <text evidence="1">Belongs to the diaminopimelate epimerase family.</text>
</comment>
<name>DAPF_MOOTA</name>
<proteinExistence type="inferred from homology"/>
<keyword id="KW-0028">Amino-acid biosynthesis</keyword>
<keyword id="KW-0963">Cytoplasm</keyword>
<keyword id="KW-0413">Isomerase</keyword>
<keyword id="KW-0457">Lysine biosynthesis</keyword>
<dbReference type="EC" id="5.1.1.7" evidence="1"/>
<dbReference type="EMBL" id="CP000232">
    <property type="protein sequence ID" value="ABC19205.1"/>
    <property type="molecule type" value="Genomic_DNA"/>
</dbReference>
<dbReference type="RefSeq" id="YP_429748.1">
    <property type="nucleotide sequence ID" value="NC_007644.1"/>
</dbReference>
<dbReference type="SMR" id="Q2RK34"/>
<dbReference type="STRING" id="264732.Moth_0888"/>
<dbReference type="EnsemblBacteria" id="ABC19205">
    <property type="protein sequence ID" value="ABC19205"/>
    <property type="gene ID" value="Moth_0888"/>
</dbReference>
<dbReference type="KEGG" id="mta:Moth_0888"/>
<dbReference type="PATRIC" id="fig|264732.11.peg.955"/>
<dbReference type="eggNOG" id="COG0253">
    <property type="taxonomic scope" value="Bacteria"/>
</dbReference>
<dbReference type="HOGENOM" id="CLU_053306_3_0_9"/>
<dbReference type="OrthoDB" id="9805408at2"/>
<dbReference type="UniPathway" id="UPA00034">
    <property type="reaction ID" value="UER00025"/>
</dbReference>
<dbReference type="GO" id="GO:0005829">
    <property type="term" value="C:cytosol"/>
    <property type="evidence" value="ECO:0007669"/>
    <property type="project" value="TreeGrafter"/>
</dbReference>
<dbReference type="GO" id="GO:0008837">
    <property type="term" value="F:diaminopimelate epimerase activity"/>
    <property type="evidence" value="ECO:0007669"/>
    <property type="project" value="UniProtKB-UniRule"/>
</dbReference>
<dbReference type="GO" id="GO:0009089">
    <property type="term" value="P:lysine biosynthetic process via diaminopimelate"/>
    <property type="evidence" value="ECO:0007669"/>
    <property type="project" value="UniProtKB-UniRule"/>
</dbReference>
<dbReference type="FunFam" id="3.10.310.10:FF:000001">
    <property type="entry name" value="Diaminopimelate epimerase"/>
    <property type="match status" value="1"/>
</dbReference>
<dbReference type="FunFam" id="3.10.310.10:FF:000004">
    <property type="entry name" value="Diaminopimelate epimerase"/>
    <property type="match status" value="1"/>
</dbReference>
<dbReference type="Gene3D" id="3.10.310.10">
    <property type="entry name" value="Diaminopimelate Epimerase, Chain A, domain 1"/>
    <property type="match status" value="2"/>
</dbReference>
<dbReference type="HAMAP" id="MF_00197">
    <property type="entry name" value="DAP_epimerase"/>
    <property type="match status" value="1"/>
</dbReference>
<dbReference type="InterPro" id="IPR018510">
    <property type="entry name" value="DAP_epimerase_AS"/>
</dbReference>
<dbReference type="InterPro" id="IPR001653">
    <property type="entry name" value="DAP_epimerase_DapF"/>
</dbReference>
<dbReference type="NCBIfam" id="TIGR00652">
    <property type="entry name" value="DapF"/>
    <property type="match status" value="1"/>
</dbReference>
<dbReference type="PANTHER" id="PTHR31689:SF0">
    <property type="entry name" value="DIAMINOPIMELATE EPIMERASE"/>
    <property type="match status" value="1"/>
</dbReference>
<dbReference type="PANTHER" id="PTHR31689">
    <property type="entry name" value="DIAMINOPIMELATE EPIMERASE, CHLOROPLASTIC"/>
    <property type="match status" value="1"/>
</dbReference>
<dbReference type="Pfam" id="PF01678">
    <property type="entry name" value="DAP_epimerase"/>
    <property type="match status" value="2"/>
</dbReference>
<dbReference type="SUPFAM" id="SSF54506">
    <property type="entry name" value="Diaminopimelate epimerase-like"/>
    <property type="match status" value="1"/>
</dbReference>
<dbReference type="PROSITE" id="PS01326">
    <property type="entry name" value="DAP_EPIMERASE"/>
    <property type="match status" value="1"/>
</dbReference>
<sequence>MHFVKMHGLGNDFVLVNAMTEKVPGDLPGLARRVCHRRFGIGADGLILVLPSEQARLRMRIFNPDGSEPEMCGNGIRCFARYVYETGLAEGEELQVETLAGIIKPRLILEGGRVAGVRVDMGAPHLEREQIPMAGTGSPVLDEPIEVNGETWRGTCVSMGNPHCVFFVEDVTGAPVTTVGPVVEHHPLFPRRTNVEFIQVLNREELRMRVWERGAGETMACGTGACAAAVAGALTGRSNRKVTVHLAAGDLQIEWSPVDNHVYMTGPAVEVFRGDFPLD</sequence>
<reference key="1">
    <citation type="journal article" date="2008" name="Environ. Microbiol.">
        <title>The complete genome sequence of Moorella thermoacetica (f. Clostridium thermoaceticum).</title>
        <authorList>
            <person name="Pierce E."/>
            <person name="Xie G."/>
            <person name="Barabote R.D."/>
            <person name="Saunders E."/>
            <person name="Han C.S."/>
            <person name="Detter J.C."/>
            <person name="Richardson P."/>
            <person name="Brettin T.S."/>
            <person name="Das A."/>
            <person name="Ljungdahl L.G."/>
            <person name="Ragsdale S.W."/>
        </authorList>
    </citation>
    <scope>NUCLEOTIDE SEQUENCE [LARGE SCALE GENOMIC DNA]</scope>
    <source>
        <strain>ATCC 39073 / JCM 9320</strain>
    </source>
</reference>
<evidence type="ECO:0000255" key="1">
    <source>
        <dbReference type="HAMAP-Rule" id="MF_00197"/>
    </source>
</evidence>